<dbReference type="EMBL" id="AJ457047">
    <property type="protein sequence ID" value="CAD29716.2"/>
    <property type="molecule type" value="Genomic_DNA"/>
</dbReference>
<dbReference type="EMBL" id="AL806523">
    <property type="status" value="NOT_ANNOTATED_CDS"/>
    <property type="molecule type" value="Genomic_DNA"/>
</dbReference>
<dbReference type="CCDS" id="CCDS18147.1"/>
<dbReference type="RefSeq" id="NP_899121.1">
    <property type="nucleotide sequence ID" value="NM_183298.2"/>
</dbReference>
<dbReference type="SMR" id="Q8R2I0"/>
<dbReference type="FunCoup" id="Q8R2I0">
    <property type="interactions" value="570"/>
</dbReference>
<dbReference type="STRING" id="10090.ENSMUSP00000092715"/>
<dbReference type="iPTMnet" id="Q8R2I0"/>
<dbReference type="PhosphoSitePlus" id="Q8R2I0"/>
<dbReference type="PaxDb" id="10090-ENSMUSP00000092715"/>
<dbReference type="ProteomicsDB" id="267494"/>
<dbReference type="Antibodypedia" id="28896">
    <property type="antibodies" value="262 antibodies from 33 providers"/>
</dbReference>
<dbReference type="DNASU" id="110805"/>
<dbReference type="Ensembl" id="ENSMUST00000095097.3">
    <property type="protein sequence ID" value="ENSMUSP00000092715.3"/>
    <property type="gene ID" value="ENSMUSG00000070990.3"/>
</dbReference>
<dbReference type="GeneID" id="110805"/>
<dbReference type="KEGG" id="mmu:110805"/>
<dbReference type="UCSC" id="uc008sto.1">
    <property type="organism name" value="mouse"/>
</dbReference>
<dbReference type="AGR" id="MGI:1353500"/>
<dbReference type="CTD" id="2304"/>
<dbReference type="MGI" id="MGI:1353500">
    <property type="gene designation" value="Foxe1"/>
</dbReference>
<dbReference type="VEuPathDB" id="HostDB:ENSMUSG00000070990"/>
<dbReference type="eggNOG" id="KOG2294">
    <property type="taxonomic scope" value="Eukaryota"/>
</dbReference>
<dbReference type="GeneTree" id="ENSGT00940000162270"/>
<dbReference type="HOGENOM" id="CLU_023357_0_0_1"/>
<dbReference type="InParanoid" id="Q8R2I0"/>
<dbReference type="OMA" id="HETPVFS"/>
<dbReference type="OrthoDB" id="5402974at2759"/>
<dbReference type="PhylomeDB" id="Q8R2I0"/>
<dbReference type="TreeFam" id="TF316127"/>
<dbReference type="BioGRID-ORCS" id="110805">
    <property type="hits" value="3 hits in 79 CRISPR screens"/>
</dbReference>
<dbReference type="PRO" id="PR:Q8R2I0"/>
<dbReference type="Proteomes" id="UP000000589">
    <property type="component" value="Chromosome 4"/>
</dbReference>
<dbReference type="RNAct" id="Q8R2I0">
    <property type="molecule type" value="protein"/>
</dbReference>
<dbReference type="Bgee" id="ENSMUSG00000070990">
    <property type="expression patterns" value="Expressed in stomodeum and 25 other cell types or tissues"/>
</dbReference>
<dbReference type="GO" id="GO:0005634">
    <property type="term" value="C:nucleus"/>
    <property type="evidence" value="ECO:0000250"/>
    <property type="project" value="UniProtKB"/>
</dbReference>
<dbReference type="GO" id="GO:0000981">
    <property type="term" value="F:DNA-binding transcription factor activity, RNA polymerase II-specific"/>
    <property type="evidence" value="ECO:0000250"/>
    <property type="project" value="UniProtKB"/>
</dbReference>
<dbReference type="GO" id="GO:0043565">
    <property type="term" value="F:sequence-specific DNA binding"/>
    <property type="evidence" value="ECO:0000250"/>
    <property type="project" value="UniProtKB"/>
</dbReference>
<dbReference type="GO" id="GO:1990837">
    <property type="term" value="F:sequence-specific double-stranded DNA binding"/>
    <property type="evidence" value="ECO:0007669"/>
    <property type="project" value="Ensembl"/>
</dbReference>
<dbReference type="GO" id="GO:0016477">
    <property type="term" value="P:cell migration"/>
    <property type="evidence" value="ECO:0000315"/>
    <property type="project" value="MGI"/>
</dbReference>
<dbReference type="GO" id="GO:0160093">
    <property type="term" value="P:chordate pharynx development"/>
    <property type="evidence" value="ECO:0007669"/>
    <property type="project" value="Ensembl"/>
</dbReference>
<dbReference type="GO" id="GO:1904888">
    <property type="term" value="P:cranial skeletal system development"/>
    <property type="evidence" value="ECO:0000315"/>
    <property type="project" value="UniProtKB"/>
</dbReference>
<dbReference type="GO" id="GO:0048562">
    <property type="term" value="P:embryonic organ morphogenesis"/>
    <property type="evidence" value="ECO:0000315"/>
    <property type="project" value="MGI"/>
</dbReference>
<dbReference type="GO" id="GO:0031069">
    <property type="term" value="P:hair follicle morphogenesis"/>
    <property type="evidence" value="ECO:0000315"/>
    <property type="project" value="MGI"/>
</dbReference>
<dbReference type="GO" id="GO:0060022">
    <property type="term" value="P:hard palate development"/>
    <property type="evidence" value="ECO:0007669"/>
    <property type="project" value="Ensembl"/>
</dbReference>
<dbReference type="GO" id="GO:0045893">
    <property type="term" value="P:positive regulation of DNA-templated transcription"/>
    <property type="evidence" value="ECO:0007669"/>
    <property type="project" value="Ensembl"/>
</dbReference>
<dbReference type="GO" id="GO:0006357">
    <property type="term" value="P:regulation of transcription by RNA polymerase II"/>
    <property type="evidence" value="ECO:0000250"/>
    <property type="project" value="UniProtKB"/>
</dbReference>
<dbReference type="GO" id="GO:0060021">
    <property type="term" value="P:roof of mouth development"/>
    <property type="evidence" value="ECO:0000315"/>
    <property type="project" value="UniProtKB"/>
</dbReference>
<dbReference type="GO" id="GO:0060023">
    <property type="term" value="P:soft palate development"/>
    <property type="evidence" value="ECO:0007669"/>
    <property type="project" value="Ensembl"/>
</dbReference>
<dbReference type="GO" id="GO:0048538">
    <property type="term" value="P:thymus development"/>
    <property type="evidence" value="ECO:0007669"/>
    <property type="project" value="Ensembl"/>
</dbReference>
<dbReference type="GO" id="GO:0030878">
    <property type="term" value="P:thyroid gland development"/>
    <property type="evidence" value="ECO:0000315"/>
    <property type="project" value="MGI"/>
</dbReference>
<dbReference type="GO" id="GO:0006590">
    <property type="term" value="P:thyroid hormone generation"/>
    <property type="evidence" value="ECO:0000315"/>
    <property type="project" value="MGI"/>
</dbReference>
<dbReference type="CDD" id="cd20019">
    <property type="entry name" value="FH_FOXE"/>
    <property type="match status" value="1"/>
</dbReference>
<dbReference type="FunFam" id="1.10.10.10:FF:000201">
    <property type="entry name" value="Forkhead box E1"/>
    <property type="match status" value="1"/>
</dbReference>
<dbReference type="Gene3D" id="1.10.10.10">
    <property type="entry name" value="Winged helix-like DNA-binding domain superfamily/Winged helix DNA-binding domain"/>
    <property type="match status" value="1"/>
</dbReference>
<dbReference type="InterPro" id="IPR001766">
    <property type="entry name" value="Fork_head_dom"/>
</dbReference>
<dbReference type="InterPro" id="IPR050211">
    <property type="entry name" value="FOX_domain-containing"/>
</dbReference>
<dbReference type="InterPro" id="IPR018122">
    <property type="entry name" value="TF_fork_head_CS_1"/>
</dbReference>
<dbReference type="InterPro" id="IPR030456">
    <property type="entry name" value="TF_fork_head_CS_2"/>
</dbReference>
<dbReference type="InterPro" id="IPR036388">
    <property type="entry name" value="WH-like_DNA-bd_sf"/>
</dbReference>
<dbReference type="InterPro" id="IPR036390">
    <property type="entry name" value="WH_DNA-bd_sf"/>
</dbReference>
<dbReference type="PANTHER" id="PTHR11829">
    <property type="entry name" value="FORKHEAD BOX PROTEIN"/>
    <property type="match status" value="1"/>
</dbReference>
<dbReference type="PANTHER" id="PTHR11829:SF368">
    <property type="entry name" value="FORKHEAD BOX PROTEIN E1"/>
    <property type="match status" value="1"/>
</dbReference>
<dbReference type="Pfam" id="PF00250">
    <property type="entry name" value="Forkhead"/>
    <property type="match status" value="1"/>
</dbReference>
<dbReference type="PRINTS" id="PR00053">
    <property type="entry name" value="FORKHEAD"/>
</dbReference>
<dbReference type="SMART" id="SM00339">
    <property type="entry name" value="FH"/>
    <property type="match status" value="1"/>
</dbReference>
<dbReference type="SUPFAM" id="SSF46785">
    <property type="entry name" value="Winged helix' DNA-binding domain"/>
    <property type="match status" value="1"/>
</dbReference>
<dbReference type="PROSITE" id="PS00657">
    <property type="entry name" value="FORK_HEAD_1"/>
    <property type="match status" value="1"/>
</dbReference>
<dbReference type="PROSITE" id="PS00658">
    <property type="entry name" value="FORK_HEAD_2"/>
    <property type="match status" value="1"/>
</dbReference>
<dbReference type="PROSITE" id="PS50039">
    <property type="entry name" value="FORK_HEAD_3"/>
    <property type="match status" value="1"/>
</dbReference>
<name>FOXE1_MOUSE</name>
<comment type="function">
    <text evidence="1 5 6">Transcription factor that binds consensus sites on a variety of gene promoters and activate their transcription. Involved in proper palate formation, most probably through the expression of MSX1 and TGFB3 genes which are direct targets of this transcription factor (PubMed:21177256). Also implicated in thyroid gland morphogenesis (PubMed:9697704). May indirectly play a role in cell growth and migration through the regulation of WNT5A expression (By similarity).</text>
</comment>
<comment type="subcellular location">
    <subcellularLocation>
        <location evidence="1">Nucleus</location>
    </subcellularLocation>
</comment>
<comment type="tissue specificity">
    <text evidence="4">Expressed in Rathke pouch, in thyroid, and in the epithelium of the pharyngeal wall and arches, whereas it is absent in the epithelium of the pharyngeal pouches.</text>
</comment>
<comment type="developmental stage">
    <text evidence="4">At 13.5 dpc, it is present in endoderm derivatives, such as tongue, palate, epiglottis, pharynx, and esophagus. Later in embryogenesis, it is detected in the choanae and whiskers.</text>
</comment>
<comment type="PTM">
    <text evidence="4">Phosphorylated.</text>
</comment>
<comment type="disruption phenotype">
    <text evidence="6">Knockout mice die before hair formation. They exhibit cleft palate and either a sublingual or completely absent thyroid gland and show neonatal hypothyroidism.</text>
</comment>
<sequence>MTAESAPPPPPQPETLAAVKEERGEAAAAGAGVPAEAAGRGAGGRRRKRPLQRGKPPYSYIALIAMAIAHAPERRLTLGGIYKFITERFPFYRDNPKKWQNSIRHNLTLNDCFLKIPREAGRPGKGNYWALDPNAEDMFESGSFLRRRKRFKRSDLSTYPAYMHDAAAAAAAAAAAIFPGAVPAARPAYPGAVYAGYAPPLAAPPPVYYPAASPGPCRVFGLVPERPLSPDLGPAPSAAGGSCAFAAAAGAAGTGSFQPAVCTGARPVNPAAYAAAYAGPDGAYPQGASSALFAAAAGRLAGPASPPAGGGSGGVEATVDFYGRTSPGQFGAALGPCYNPGGQLGAGGGGAYHSRHATAYPGAVDRFVSAM</sequence>
<protein>
    <recommendedName>
        <fullName>Forkhead box protein E1</fullName>
    </recommendedName>
    <alternativeName>
        <fullName>Thyroid transcription factor 2</fullName>
        <shortName>TTF-2</shortName>
    </alternativeName>
</protein>
<proteinExistence type="evidence at protein level"/>
<organism>
    <name type="scientific">Mus musculus</name>
    <name type="common">Mouse</name>
    <dbReference type="NCBI Taxonomy" id="10090"/>
    <lineage>
        <taxon>Eukaryota</taxon>
        <taxon>Metazoa</taxon>
        <taxon>Chordata</taxon>
        <taxon>Craniata</taxon>
        <taxon>Vertebrata</taxon>
        <taxon>Euteleostomi</taxon>
        <taxon>Mammalia</taxon>
        <taxon>Eutheria</taxon>
        <taxon>Euarchontoglires</taxon>
        <taxon>Glires</taxon>
        <taxon>Rodentia</taxon>
        <taxon>Myomorpha</taxon>
        <taxon>Muroidea</taxon>
        <taxon>Muridae</taxon>
        <taxon>Murinae</taxon>
        <taxon>Mus</taxon>
        <taxon>Mus</taxon>
    </lineage>
</organism>
<feature type="chain" id="PRO_0000091827" description="Forkhead box protein E1">
    <location>
        <begin position="1"/>
        <end position="371"/>
    </location>
</feature>
<feature type="DNA-binding region" description="Fork-head" evidence="2">
    <location>
        <begin position="55"/>
        <end position="149"/>
    </location>
</feature>
<feature type="region of interest" description="Disordered" evidence="3">
    <location>
        <begin position="21"/>
        <end position="53"/>
    </location>
</feature>
<feature type="compositionally biased region" description="Low complexity" evidence="3">
    <location>
        <begin position="26"/>
        <end position="39"/>
    </location>
</feature>
<feature type="compositionally biased region" description="Basic residues" evidence="3">
    <location>
        <begin position="43"/>
        <end position="52"/>
    </location>
</feature>
<reference key="1">
    <citation type="journal article" date="2002" name="Dev. Dyn.">
        <title>Distribution of the titf2/foxe1 gene product is consistent with an important role in the development of foregut endoderm, palate, and hair.</title>
        <authorList>
            <person name="Dathan N."/>
            <person name="Parlato R."/>
            <person name="Rosica A."/>
            <person name="De Felice M."/>
            <person name="Di Lauro R."/>
        </authorList>
    </citation>
    <scope>NUCLEOTIDE SEQUENCE [GENOMIC DNA]</scope>
    <scope>PHOSPHORYLATION</scope>
    <scope>TISSUE SPECIFICITY</scope>
    <scope>DEVELOPMENTAL STAGE</scope>
    <source>
        <strain>129/Sv</strain>
    </source>
</reference>
<reference key="2">
    <citation type="journal article" date="2009" name="PLoS Biol.">
        <title>Lineage-specific biology revealed by a finished genome assembly of the mouse.</title>
        <authorList>
            <person name="Church D.M."/>
            <person name="Goodstadt L."/>
            <person name="Hillier L.W."/>
            <person name="Zody M.C."/>
            <person name="Goldstein S."/>
            <person name="She X."/>
            <person name="Bult C.J."/>
            <person name="Agarwala R."/>
            <person name="Cherry J.L."/>
            <person name="DiCuccio M."/>
            <person name="Hlavina W."/>
            <person name="Kapustin Y."/>
            <person name="Meric P."/>
            <person name="Maglott D."/>
            <person name="Birtle Z."/>
            <person name="Marques A.C."/>
            <person name="Graves T."/>
            <person name="Zhou S."/>
            <person name="Teague B."/>
            <person name="Potamousis K."/>
            <person name="Churas C."/>
            <person name="Place M."/>
            <person name="Herschleb J."/>
            <person name="Runnheim R."/>
            <person name="Forrest D."/>
            <person name="Amos-Landgraf J."/>
            <person name="Schwartz D.C."/>
            <person name="Cheng Z."/>
            <person name="Lindblad-Toh K."/>
            <person name="Eichler E.E."/>
            <person name="Ponting C.P."/>
        </authorList>
    </citation>
    <scope>NUCLEOTIDE SEQUENCE [LARGE SCALE GENOMIC DNA]</scope>
    <source>
        <strain>C57BL/6J</strain>
    </source>
</reference>
<reference key="3">
    <citation type="journal article" date="1998" name="Nat. Genet.">
        <title>A mouse model for hereditary thyroid dysgenesis and cleft palate.</title>
        <authorList>
            <person name="De Felice M."/>
            <person name="Ovitt C."/>
            <person name="Biffali E."/>
            <person name="Rodriguez-Mallon A."/>
            <person name="Arra C."/>
            <person name="Anastassiadis K."/>
            <person name="Macchia P.E."/>
            <person name="Mattei M.G."/>
            <person name="Mariano A."/>
            <person name="Schoeler H."/>
            <person name="Macchia V."/>
            <person name="Di Lauro R."/>
        </authorList>
    </citation>
    <scope>FUNCTION</scope>
    <scope>DISRUPTION PHENOTYPE</scope>
</reference>
<reference key="4">
    <citation type="journal article" date="2011" name="Hum. Mol. Genet.">
        <title>MSX1 and TGF-beta3 are novel target genes functionally regulated by FOXE1.</title>
        <authorList>
            <person name="Venza I."/>
            <person name="Visalli M."/>
            <person name="Parrillo L."/>
            <person name="De Felice M."/>
            <person name="Teti D."/>
            <person name="Venza M."/>
        </authorList>
    </citation>
    <scope>FUNCTION</scope>
</reference>
<keyword id="KW-0238">DNA-binding</keyword>
<keyword id="KW-0539">Nucleus</keyword>
<keyword id="KW-0597">Phosphoprotein</keyword>
<keyword id="KW-1185">Reference proteome</keyword>
<keyword id="KW-0804">Transcription</keyword>
<keyword id="KW-0805">Transcription regulation</keyword>
<accession>Q8R2I0</accession>
<accession>A2AM00</accession>
<evidence type="ECO:0000250" key="1">
    <source>
        <dbReference type="UniProtKB" id="O00358"/>
    </source>
</evidence>
<evidence type="ECO:0000255" key="2">
    <source>
        <dbReference type="PROSITE-ProRule" id="PRU00089"/>
    </source>
</evidence>
<evidence type="ECO:0000256" key="3">
    <source>
        <dbReference type="SAM" id="MobiDB-lite"/>
    </source>
</evidence>
<evidence type="ECO:0000269" key="4">
    <source>
    </source>
</evidence>
<evidence type="ECO:0000269" key="5">
    <source>
    </source>
</evidence>
<evidence type="ECO:0000269" key="6">
    <source>
    </source>
</evidence>
<gene>
    <name type="primary">Foxe1</name>
    <name type="synonym">Titf2</name>
</gene>